<proteinExistence type="inferred from homology"/>
<comment type="catalytic activity">
    <reaction evidence="1">
        <text>CMP + ATP = CDP + ADP</text>
        <dbReference type="Rhea" id="RHEA:11600"/>
        <dbReference type="ChEBI" id="CHEBI:30616"/>
        <dbReference type="ChEBI" id="CHEBI:58069"/>
        <dbReference type="ChEBI" id="CHEBI:60377"/>
        <dbReference type="ChEBI" id="CHEBI:456216"/>
        <dbReference type="EC" id="2.7.4.25"/>
    </reaction>
</comment>
<comment type="catalytic activity">
    <reaction evidence="1">
        <text>dCMP + ATP = dCDP + ADP</text>
        <dbReference type="Rhea" id="RHEA:25094"/>
        <dbReference type="ChEBI" id="CHEBI:30616"/>
        <dbReference type="ChEBI" id="CHEBI:57566"/>
        <dbReference type="ChEBI" id="CHEBI:58593"/>
        <dbReference type="ChEBI" id="CHEBI:456216"/>
        <dbReference type="EC" id="2.7.4.25"/>
    </reaction>
</comment>
<comment type="subcellular location">
    <subcellularLocation>
        <location evidence="1">Cytoplasm</location>
    </subcellularLocation>
</comment>
<comment type="similarity">
    <text evidence="1">Belongs to the cytidylate kinase family. Type 1 subfamily.</text>
</comment>
<accession>A4VVU8</accession>
<organism>
    <name type="scientific">Streptococcus suis (strain 05ZYH33)</name>
    <dbReference type="NCBI Taxonomy" id="391295"/>
    <lineage>
        <taxon>Bacteria</taxon>
        <taxon>Bacillati</taxon>
        <taxon>Bacillota</taxon>
        <taxon>Bacilli</taxon>
        <taxon>Lactobacillales</taxon>
        <taxon>Streptococcaceae</taxon>
        <taxon>Streptococcus</taxon>
    </lineage>
</organism>
<name>KCY_STRSY</name>
<feature type="chain" id="PRO_1000048303" description="Cytidylate kinase">
    <location>
        <begin position="1"/>
        <end position="225"/>
    </location>
</feature>
<feature type="binding site" evidence="1">
    <location>
        <begin position="10"/>
        <end position="18"/>
    </location>
    <ligand>
        <name>ATP</name>
        <dbReference type="ChEBI" id="CHEBI:30616"/>
    </ligand>
</feature>
<sequence>MKSIQIAIDGPASSGKSTVAKIIAKNLGYTYLDTGAMYRSATYLALTNGIEVTDQNRIVDLLAQYPIRFGRDENGQQLVFVGDEDVTLPIRDNQVTNNVSAVAALPLVREELVRLQQDIAQAGGIVMDGRDIGTVVLPQAELKIFLVASVEERALRRFKENTERGIETDLESLKEEIAARDYKDSNREVSPLKAADDAITFDTTGVSIEGVVKFISEKAKEILDR</sequence>
<keyword id="KW-0067">ATP-binding</keyword>
<keyword id="KW-0963">Cytoplasm</keyword>
<keyword id="KW-0418">Kinase</keyword>
<keyword id="KW-0547">Nucleotide-binding</keyword>
<keyword id="KW-0808">Transferase</keyword>
<gene>
    <name evidence="1" type="primary">cmk</name>
    <name type="ordered locus">SSU05_1271</name>
</gene>
<dbReference type="EC" id="2.7.4.25" evidence="1"/>
<dbReference type="EMBL" id="CP000407">
    <property type="protein sequence ID" value="ABP90237.1"/>
    <property type="molecule type" value="Genomic_DNA"/>
</dbReference>
<dbReference type="SMR" id="A4VVU8"/>
<dbReference type="STRING" id="391295.SSU05_1271"/>
<dbReference type="KEGG" id="ssu:SSU05_1271"/>
<dbReference type="eggNOG" id="COG0283">
    <property type="taxonomic scope" value="Bacteria"/>
</dbReference>
<dbReference type="HOGENOM" id="CLU_079959_0_2_9"/>
<dbReference type="GO" id="GO:0005829">
    <property type="term" value="C:cytosol"/>
    <property type="evidence" value="ECO:0007669"/>
    <property type="project" value="TreeGrafter"/>
</dbReference>
<dbReference type="GO" id="GO:0005524">
    <property type="term" value="F:ATP binding"/>
    <property type="evidence" value="ECO:0007669"/>
    <property type="project" value="UniProtKB-UniRule"/>
</dbReference>
<dbReference type="GO" id="GO:0036430">
    <property type="term" value="F:CMP kinase activity"/>
    <property type="evidence" value="ECO:0007669"/>
    <property type="project" value="RHEA"/>
</dbReference>
<dbReference type="GO" id="GO:0036431">
    <property type="term" value="F:dCMP kinase activity"/>
    <property type="evidence" value="ECO:0007669"/>
    <property type="project" value="RHEA"/>
</dbReference>
<dbReference type="GO" id="GO:0015949">
    <property type="term" value="P:nucleobase-containing small molecule interconversion"/>
    <property type="evidence" value="ECO:0007669"/>
    <property type="project" value="TreeGrafter"/>
</dbReference>
<dbReference type="GO" id="GO:0006220">
    <property type="term" value="P:pyrimidine nucleotide metabolic process"/>
    <property type="evidence" value="ECO:0007669"/>
    <property type="project" value="UniProtKB-UniRule"/>
</dbReference>
<dbReference type="CDD" id="cd02020">
    <property type="entry name" value="CMPK"/>
    <property type="match status" value="1"/>
</dbReference>
<dbReference type="FunFam" id="3.40.50.300:FF:000484">
    <property type="entry name" value="Cytidylate kinase"/>
    <property type="match status" value="1"/>
</dbReference>
<dbReference type="Gene3D" id="3.40.50.300">
    <property type="entry name" value="P-loop containing nucleotide triphosphate hydrolases"/>
    <property type="match status" value="1"/>
</dbReference>
<dbReference type="HAMAP" id="MF_00238">
    <property type="entry name" value="Cytidyl_kinase_type1"/>
    <property type="match status" value="1"/>
</dbReference>
<dbReference type="InterPro" id="IPR003136">
    <property type="entry name" value="Cytidylate_kin"/>
</dbReference>
<dbReference type="InterPro" id="IPR011994">
    <property type="entry name" value="Cytidylate_kinase_dom"/>
</dbReference>
<dbReference type="InterPro" id="IPR027417">
    <property type="entry name" value="P-loop_NTPase"/>
</dbReference>
<dbReference type="NCBIfam" id="TIGR00017">
    <property type="entry name" value="cmk"/>
    <property type="match status" value="1"/>
</dbReference>
<dbReference type="PANTHER" id="PTHR21299:SF2">
    <property type="entry name" value="CYTIDYLATE KINASE"/>
    <property type="match status" value="1"/>
</dbReference>
<dbReference type="PANTHER" id="PTHR21299">
    <property type="entry name" value="CYTIDYLATE KINASE/PANTOATE-BETA-ALANINE LIGASE"/>
    <property type="match status" value="1"/>
</dbReference>
<dbReference type="Pfam" id="PF02224">
    <property type="entry name" value="Cytidylate_kin"/>
    <property type="match status" value="1"/>
</dbReference>
<dbReference type="SUPFAM" id="SSF52540">
    <property type="entry name" value="P-loop containing nucleoside triphosphate hydrolases"/>
    <property type="match status" value="1"/>
</dbReference>
<reference key="1">
    <citation type="journal article" date="2007" name="PLoS ONE">
        <title>A glimpse of streptococcal toxic shock syndrome from comparative genomics of S. suis 2 Chinese isolates.</title>
        <authorList>
            <person name="Chen C."/>
            <person name="Tang J."/>
            <person name="Dong W."/>
            <person name="Wang C."/>
            <person name="Feng Y."/>
            <person name="Wang J."/>
            <person name="Zheng F."/>
            <person name="Pan X."/>
            <person name="Liu D."/>
            <person name="Li M."/>
            <person name="Song Y."/>
            <person name="Zhu X."/>
            <person name="Sun H."/>
            <person name="Feng T."/>
            <person name="Guo Z."/>
            <person name="Ju A."/>
            <person name="Ge J."/>
            <person name="Dong Y."/>
            <person name="Sun W."/>
            <person name="Jiang Y."/>
            <person name="Wang J."/>
            <person name="Yan J."/>
            <person name="Yang H."/>
            <person name="Wang X."/>
            <person name="Gao G.F."/>
            <person name="Yang R."/>
            <person name="Wang J."/>
            <person name="Yu J."/>
        </authorList>
    </citation>
    <scope>NUCLEOTIDE SEQUENCE [LARGE SCALE GENOMIC DNA]</scope>
    <source>
        <strain>05ZYH33</strain>
    </source>
</reference>
<protein>
    <recommendedName>
        <fullName evidence="1">Cytidylate kinase</fullName>
        <shortName evidence="1">CK</shortName>
        <ecNumber evidence="1">2.7.4.25</ecNumber>
    </recommendedName>
    <alternativeName>
        <fullName evidence="1">Cytidine monophosphate kinase</fullName>
        <shortName evidence="1">CMP kinase</shortName>
    </alternativeName>
</protein>
<evidence type="ECO:0000255" key="1">
    <source>
        <dbReference type="HAMAP-Rule" id="MF_00238"/>
    </source>
</evidence>